<protein>
    <recommendedName>
        <fullName evidence="1">Acyl carrier protein</fullName>
        <shortName evidence="1">ACP</shortName>
    </recommendedName>
</protein>
<dbReference type="EMBL" id="AE015925">
    <property type="protein sequence ID" value="AAP05231.1"/>
    <property type="molecule type" value="Genomic_DNA"/>
</dbReference>
<dbReference type="RefSeq" id="WP_011006447.1">
    <property type="nucleotide sequence ID" value="NC_003361.3"/>
</dbReference>
<dbReference type="SMR" id="Q823D5"/>
<dbReference type="STRING" id="227941.CCA_00487"/>
<dbReference type="KEGG" id="cca:CCA_00487"/>
<dbReference type="eggNOG" id="COG0236">
    <property type="taxonomic scope" value="Bacteria"/>
</dbReference>
<dbReference type="HOGENOM" id="CLU_108696_5_1_0"/>
<dbReference type="OrthoDB" id="9804551at2"/>
<dbReference type="UniPathway" id="UPA00094"/>
<dbReference type="Proteomes" id="UP000002193">
    <property type="component" value="Chromosome"/>
</dbReference>
<dbReference type="GO" id="GO:0005829">
    <property type="term" value="C:cytosol"/>
    <property type="evidence" value="ECO:0007669"/>
    <property type="project" value="TreeGrafter"/>
</dbReference>
<dbReference type="GO" id="GO:0016020">
    <property type="term" value="C:membrane"/>
    <property type="evidence" value="ECO:0007669"/>
    <property type="project" value="GOC"/>
</dbReference>
<dbReference type="GO" id="GO:0000035">
    <property type="term" value="F:acyl binding"/>
    <property type="evidence" value="ECO:0007669"/>
    <property type="project" value="TreeGrafter"/>
</dbReference>
<dbReference type="GO" id="GO:0000036">
    <property type="term" value="F:acyl carrier activity"/>
    <property type="evidence" value="ECO:0007669"/>
    <property type="project" value="UniProtKB-UniRule"/>
</dbReference>
<dbReference type="GO" id="GO:0009245">
    <property type="term" value="P:lipid A biosynthetic process"/>
    <property type="evidence" value="ECO:0007669"/>
    <property type="project" value="TreeGrafter"/>
</dbReference>
<dbReference type="Gene3D" id="1.10.1200.10">
    <property type="entry name" value="ACP-like"/>
    <property type="match status" value="1"/>
</dbReference>
<dbReference type="HAMAP" id="MF_01217">
    <property type="entry name" value="Acyl_carrier"/>
    <property type="match status" value="1"/>
</dbReference>
<dbReference type="InterPro" id="IPR003231">
    <property type="entry name" value="ACP"/>
</dbReference>
<dbReference type="InterPro" id="IPR036736">
    <property type="entry name" value="ACP-like_sf"/>
</dbReference>
<dbReference type="InterPro" id="IPR009081">
    <property type="entry name" value="PP-bd_ACP"/>
</dbReference>
<dbReference type="InterPro" id="IPR006162">
    <property type="entry name" value="Ppantetheine_attach_site"/>
</dbReference>
<dbReference type="NCBIfam" id="TIGR00517">
    <property type="entry name" value="acyl_carrier"/>
    <property type="match status" value="1"/>
</dbReference>
<dbReference type="NCBIfam" id="NF002148">
    <property type="entry name" value="PRK00982.1-2"/>
    <property type="match status" value="1"/>
</dbReference>
<dbReference type="NCBIfam" id="NF002150">
    <property type="entry name" value="PRK00982.1-4"/>
    <property type="match status" value="1"/>
</dbReference>
<dbReference type="NCBIfam" id="NF002151">
    <property type="entry name" value="PRK00982.1-5"/>
    <property type="match status" value="1"/>
</dbReference>
<dbReference type="PANTHER" id="PTHR20863">
    <property type="entry name" value="ACYL CARRIER PROTEIN"/>
    <property type="match status" value="1"/>
</dbReference>
<dbReference type="PANTHER" id="PTHR20863:SF76">
    <property type="entry name" value="CARRIER DOMAIN-CONTAINING PROTEIN"/>
    <property type="match status" value="1"/>
</dbReference>
<dbReference type="Pfam" id="PF00550">
    <property type="entry name" value="PP-binding"/>
    <property type="match status" value="1"/>
</dbReference>
<dbReference type="SUPFAM" id="SSF47336">
    <property type="entry name" value="ACP-like"/>
    <property type="match status" value="1"/>
</dbReference>
<dbReference type="PROSITE" id="PS50075">
    <property type="entry name" value="CARRIER"/>
    <property type="match status" value="1"/>
</dbReference>
<dbReference type="PROSITE" id="PS00012">
    <property type="entry name" value="PHOSPHOPANTETHEINE"/>
    <property type="match status" value="1"/>
</dbReference>
<sequence>MSLEDDVKSIIVEQLGVDASEVNENSSFIEDLNADSLDLTELIMTLEEKFNFEISEQDAEQLRTVGDVITYIKTRQG</sequence>
<comment type="function">
    <text evidence="1">Carrier of the growing fatty acid chain in fatty acid biosynthesis.</text>
</comment>
<comment type="pathway">
    <text evidence="1">Lipid metabolism; fatty acid biosynthesis.</text>
</comment>
<comment type="subcellular location">
    <subcellularLocation>
        <location evidence="1">Cytoplasm</location>
    </subcellularLocation>
</comment>
<comment type="PTM">
    <text evidence="1">4'-phosphopantetheine is transferred from CoA to a specific serine of apo-ACP by AcpS. This modification is essential for activity because fatty acids are bound in thioester linkage to the sulfhydryl of the prosthetic group.</text>
</comment>
<comment type="similarity">
    <text evidence="1">Belongs to the acyl carrier protein (ACP) family.</text>
</comment>
<accession>Q823D5</accession>
<proteinExistence type="inferred from homology"/>
<feature type="chain" id="PRO_0000180125" description="Acyl carrier protein">
    <location>
        <begin position="1"/>
        <end position="77"/>
    </location>
</feature>
<feature type="domain" description="Carrier" evidence="2">
    <location>
        <begin position="1"/>
        <end position="76"/>
    </location>
</feature>
<feature type="modified residue" description="O-(pantetheine 4'-phosphoryl)serine" evidence="2">
    <location>
        <position position="36"/>
    </location>
</feature>
<gene>
    <name evidence="1" type="primary">acpP</name>
    <name type="ordered locus">CCA_00487</name>
</gene>
<keyword id="KW-0963">Cytoplasm</keyword>
<keyword id="KW-0275">Fatty acid biosynthesis</keyword>
<keyword id="KW-0276">Fatty acid metabolism</keyword>
<keyword id="KW-0444">Lipid biosynthesis</keyword>
<keyword id="KW-0443">Lipid metabolism</keyword>
<keyword id="KW-0596">Phosphopantetheine</keyword>
<keyword id="KW-0597">Phosphoprotein</keyword>
<organism>
    <name type="scientific">Chlamydia caviae (strain ATCC VR-813 / DSM 19441 / 03DC25 / GPIC)</name>
    <name type="common">Chlamydophila caviae</name>
    <dbReference type="NCBI Taxonomy" id="227941"/>
    <lineage>
        <taxon>Bacteria</taxon>
        <taxon>Pseudomonadati</taxon>
        <taxon>Chlamydiota</taxon>
        <taxon>Chlamydiia</taxon>
        <taxon>Chlamydiales</taxon>
        <taxon>Chlamydiaceae</taxon>
        <taxon>Chlamydia/Chlamydophila group</taxon>
        <taxon>Chlamydia</taxon>
    </lineage>
</organism>
<reference key="1">
    <citation type="journal article" date="2003" name="Nucleic Acids Res.">
        <title>Genome sequence of Chlamydophila caviae (Chlamydia psittaci GPIC): examining the role of niche-specific genes in the evolution of the Chlamydiaceae.</title>
        <authorList>
            <person name="Read T.D."/>
            <person name="Myers G.S.A."/>
            <person name="Brunham R.C."/>
            <person name="Nelson W.C."/>
            <person name="Paulsen I.T."/>
            <person name="Heidelberg J.F."/>
            <person name="Holtzapple E.K."/>
            <person name="Khouri H.M."/>
            <person name="Federova N.B."/>
            <person name="Carty H.A."/>
            <person name="Umayam L.A."/>
            <person name="Haft D.H."/>
            <person name="Peterson J.D."/>
            <person name="Beanan M.J."/>
            <person name="White O."/>
            <person name="Salzberg S.L."/>
            <person name="Hsia R.-C."/>
            <person name="McClarty G."/>
            <person name="Rank R.G."/>
            <person name="Bavoil P.M."/>
            <person name="Fraser C.M."/>
        </authorList>
    </citation>
    <scope>NUCLEOTIDE SEQUENCE [LARGE SCALE GENOMIC DNA]</scope>
    <source>
        <strain>ATCC VR-813 / DSM 19441 / 03DC25 / GPIC</strain>
    </source>
</reference>
<evidence type="ECO:0000255" key="1">
    <source>
        <dbReference type="HAMAP-Rule" id="MF_01217"/>
    </source>
</evidence>
<evidence type="ECO:0000255" key="2">
    <source>
        <dbReference type="PROSITE-ProRule" id="PRU00258"/>
    </source>
</evidence>
<name>ACP_CHLCV</name>